<evidence type="ECO:0000255" key="1">
    <source>
        <dbReference type="HAMAP-Rule" id="MF_00791"/>
    </source>
</evidence>
<feature type="chain" id="PRO_1000083624" description="Protein ApaG">
    <location>
        <begin position="1"/>
        <end position="125"/>
    </location>
</feature>
<feature type="domain" description="ApaG" evidence="1">
    <location>
        <begin position="1"/>
        <end position="125"/>
    </location>
</feature>
<dbReference type="EMBL" id="BX950851">
    <property type="protein sequence ID" value="CAG76758.1"/>
    <property type="molecule type" value="Genomic_DNA"/>
</dbReference>
<dbReference type="RefSeq" id="WP_011095358.1">
    <property type="nucleotide sequence ID" value="NC_004547.2"/>
</dbReference>
<dbReference type="SMR" id="Q6D0D9"/>
<dbReference type="STRING" id="218491.ECA3860"/>
<dbReference type="GeneID" id="57210478"/>
<dbReference type="KEGG" id="eca:ECA3860"/>
<dbReference type="PATRIC" id="fig|218491.5.peg.3915"/>
<dbReference type="eggNOG" id="COG2967">
    <property type="taxonomic scope" value="Bacteria"/>
</dbReference>
<dbReference type="HOGENOM" id="CLU_128074_0_0_6"/>
<dbReference type="OrthoDB" id="9795226at2"/>
<dbReference type="Proteomes" id="UP000007966">
    <property type="component" value="Chromosome"/>
</dbReference>
<dbReference type="GO" id="GO:0070987">
    <property type="term" value="P:error-free translesion synthesis"/>
    <property type="evidence" value="ECO:0007669"/>
    <property type="project" value="TreeGrafter"/>
</dbReference>
<dbReference type="Gene3D" id="2.60.40.1470">
    <property type="entry name" value="ApaG domain"/>
    <property type="match status" value="1"/>
</dbReference>
<dbReference type="HAMAP" id="MF_00791">
    <property type="entry name" value="ApaG"/>
    <property type="match status" value="1"/>
</dbReference>
<dbReference type="InterPro" id="IPR007474">
    <property type="entry name" value="ApaG_domain"/>
</dbReference>
<dbReference type="InterPro" id="IPR036767">
    <property type="entry name" value="ApaG_sf"/>
</dbReference>
<dbReference type="InterPro" id="IPR023065">
    <property type="entry name" value="Uncharacterised_ApaG"/>
</dbReference>
<dbReference type="NCBIfam" id="NF003967">
    <property type="entry name" value="PRK05461.1"/>
    <property type="match status" value="1"/>
</dbReference>
<dbReference type="PANTHER" id="PTHR14289">
    <property type="entry name" value="F-BOX ONLY PROTEIN 3"/>
    <property type="match status" value="1"/>
</dbReference>
<dbReference type="PANTHER" id="PTHR14289:SF16">
    <property type="entry name" value="POLYMERASE DELTA-INTERACTING PROTEIN 2"/>
    <property type="match status" value="1"/>
</dbReference>
<dbReference type="Pfam" id="PF04379">
    <property type="entry name" value="DUF525"/>
    <property type="match status" value="1"/>
</dbReference>
<dbReference type="SUPFAM" id="SSF110069">
    <property type="entry name" value="ApaG-like"/>
    <property type="match status" value="1"/>
</dbReference>
<dbReference type="PROSITE" id="PS51087">
    <property type="entry name" value="APAG"/>
    <property type="match status" value="1"/>
</dbReference>
<protein>
    <recommendedName>
        <fullName evidence="1">Protein ApaG</fullName>
    </recommendedName>
</protein>
<organism>
    <name type="scientific">Pectobacterium atrosepticum (strain SCRI 1043 / ATCC BAA-672)</name>
    <name type="common">Erwinia carotovora subsp. atroseptica</name>
    <dbReference type="NCBI Taxonomy" id="218491"/>
    <lineage>
        <taxon>Bacteria</taxon>
        <taxon>Pseudomonadati</taxon>
        <taxon>Pseudomonadota</taxon>
        <taxon>Gammaproteobacteria</taxon>
        <taxon>Enterobacterales</taxon>
        <taxon>Pectobacteriaceae</taxon>
        <taxon>Pectobacterium</taxon>
    </lineage>
</organism>
<reference key="1">
    <citation type="journal article" date="2004" name="Proc. Natl. Acad. Sci. U.S.A.">
        <title>Genome sequence of the enterobacterial phytopathogen Erwinia carotovora subsp. atroseptica and characterization of virulence factors.</title>
        <authorList>
            <person name="Bell K.S."/>
            <person name="Sebaihia M."/>
            <person name="Pritchard L."/>
            <person name="Holden M.T.G."/>
            <person name="Hyman L.J."/>
            <person name="Holeva M.C."/>
            <person name="Thomson N.R."/>
            <person name="Bentley S.D."/>
            <person name="Churcher L.J.C."/>
            <person name="Mungall K."/>
            <person name="Atkin R."/>
            <person name="Bason N."/>
            <person name="Brooks K."/>
            <person name="Chillingworth T."/>
            <person name="Clark K."/>
            <person name="Doggett J."/>
            <person name="Fraser A."/>
            <person name="Hance Z."/>
            <person name="Hauser H."/>
            <person name="Jagels K."/>
            <person name="Moule S."/>
            <person name="Norbertczak H."/>
            <person name="Ormond D."/>
            <person name="Price C."/>
            <person name="Quail M.A."/>
            <person name="Sanders M."/>
            <person name="Walker D."/>
            <person name="Whitehead S."/>
            <person name="Salmond G.P.C."/>
            <person name="Birch P.R.J."/>
            <person name="Parkhill J."/>
            <person name="Toth I.K."/>
        </authorList>
    </citation>
    <scope>NUCLEOTIDE SEQUENCE [LARGE SCALE GENOMIC DNA]</scope>
    <source>
        <strain>SCRI 1043 / ATCC BAA-672</strain>
    </source>
</reference>
<accession>Q6D0D9</accession>
<gene>
    <name evidence="1" type="primary">apaG</name>
    <name type="ordered locus">ECA3860</name>
</gene>
<proteinExistence type="inferred from homology"/>
<keyword id="KW-1185">Reference proteome</keyword>
<name>APAG_PECAS</name>
<sequence length="125" mass="14088">MINAPRVCVQIQSFYVESQSEPDEERFVFAYTVTVRNLGRHEVQLLGRYWLITNGNGRQTEVQGEGVVGEQPIIEPGGEFQYTSGAVMETPLGTMEGHYHMVDHQSKAFQVPIPVFRLAIPSLIH</sequence>